<name>RL18A_TETTH</name>
<proteinExistence type="evidence at protein level"/>
<organism>
    <name type="scientific">Tetrahymena thermophila</name>
    <dbReference type="NCBI Taxonomy" id="5911"/>
    <lineage>
        <taxon>Eukaryota</taxon>
        <taxon>Sar</taxon>
        <taxon>Alveolata</taxon>
        <taxon>Ciliophora</taxon>
        <taxon>Intramacronucleata</taxon>
        <taxon>Oligohymenophorea</taxon>
        <taxon>Hymenostomatida</taxon>
        <taxon>Tetrahymenina</taxon>
        <taxon>Tetrahymenidae</taxon>
        <taxon>Tetrahymena</taxon>
    </lineage>
</organism>
<accession>P0DJ18</accession>
<reference key="1">
    <citation type="submission" date="2008-04" db="EMBL/GenBank/DDBJ databases">
        <title>cDNA library made from Tetrahymena thermophila cells (2008).</title>
        <authorList>
            <person name="Coyne R.S."/>
            <person name="Thiagarajan M."/>
            <person name="Eisen J.A."/>
            <person name="Pearlman R.E."/>
            <person name="Garg J."/>
        </authorList>
    </citation>
    <scope>NUCLEOTIDE SEQUENCE [LARGE SCALE MRNA]</scope>
    <source>
        <strain>CU428</strain>
    </source>
</reference>
<sequence>MVRKAAQEPKDDTLQMKVRQYVVSAARLPIEQGTKPEILQMRVFARDEVHAKTKFWYNMRKLNKIKRSQGRILSVNEIYEKSLNTVKTYGIVLKYQSRTAIHNMYKEYRDVSLNGAVSQLIQDMAGNHRAQPDTIQIIRTATLEPKDIKRPATLAMRNAALKFPIVKTIHRPSEKKYRTVYKATRPTTF</sequence>
<comment type="subcellular location">
    <subcellularLocation>
        <location evidence="1">Cytoplasm</location>
    </subcellularLocation>
</comment>
<comment type="similarity">
    <text evidence="2">Belongs to the eukaryotic ribosomal protein eL20 family.</text>
</comment>
<dbReference type="EMBL" id="FF570408">
    <property type="status" value="NOT_ANNOTATED_CDS"/>
    <property type="molecule type" value="mRNA"/>
</dbReference>
<dbReference type="PDB" id="4V8P">
    <property type="method" value="X-ray"/>
    <property type="resolution" value="3.52 A"/>
    <property type="chains" value="AX/DX/FX/HX=1-189"/>
</dbReference>
<dbReference type="PDBsum" id="4V8P"/>
<dbReference type="SMR" id="P0DJ18"/>
<dbReference type="IntAct" id="P0DJ18">
    <property type="interactions" value="1"/>
</dbReference>
<dbReference type="GO" id="GO:0005737">
    <property type="term" value="C:cytoplasm"/>
    <property type="evidence" value="ECO:0007669"/>
    <property type="project" value="UniProtKB-SubCell"/>
</dbReference>
<dbReference type="GO" id="GO:1990904">
    <property type="term" value="C:ribonucleoprotein complex"/>
    <property type="evidence" value="ECO:0007669"/>
    <property type="project" value="UniProtKB-KW"/>
</dbReference>
<dbReference type="GO" id="GO:0005840">
    <property type="term" value="C:ribosome"/>
    <property type="evidence" value="ECO:0007669"/>
    <property type="project" value="UniProtKB-KW"/>
</dbReference>
<dbReference type="GO" id="GO:0003735">
    <property type="term" value="F:structural constituent of ribosome"/>
    <property type="evidence" value="ECO:0007669"/>
    <property type="project" value="InterPro"/>
</dbReference>
<dbReference type="GO" id="GO:0006412">
    <property type="term" value="P:translation"/>
    <property type="evidence" value="ECO:0007669"/>
    <property type="project" value="InterPro"/>
</dbReference>
<dbReference type="FunFam" id="3.10.20.10:FF:000001">
    <property type="entry name" value="60S ribosomal protein L18a"/>
    <property type="match status" value="1"/>
</dbReference>
<dbReference type="Gene3D" id="3.10.20.10">
    <property type="match status" value="2"/>
</dbReference>
<dbReference type="HAMAP" id="MF_00273">
    <property type="entry name" value="Ribosomal_eL20"/>
    <property type="match status" value="1"/>
</dbReference>
<dbReference type="InterPro" id="IPR028877">
    <property type="entry name" value="Ribosomal_eL20"/>
</dbReference>
<dbReference type="InterPro" id="IPR023573">
    <property type="entry name" value="Ribosomal_eL20_dom"/>
</dbReference>
<dbReference type="InterPro" id="IPR021138">
    <property type="entry name" value="Ribosomal_eL20_eukaryotes"/>
</dbReference>
<dbReference type="PANTHER" id="PTHR10052">
    <property type="entry name" value="60S RIBOSOMAL PROTEIN L18A"/>
    <property type="match status" value="1"/>
</dbReference>
<dbReference type="Pfam" id="PF01775">
    <property type="entry name" value="Ribosomal_L18A"/>
    <property type="match status" value="1"/>
</dbReference>
<dbReference type="PIRSF" id="PIRSF002190">
    <property type="entry name" value="Ribosomal_L18a"/>
    <property type="match status" value="1"/>
</dbReference>
<dbReference type="SUPFAM" id="SSF160374">
    <property type="entry name" value="RplX-like"/>
    <property type="match status" value="1"/>
</dbReference>
<gene>
    <name type="primary">RPL18A</name>
    <name type="synonym">RPL20</name>
</gene>
<feature type="chain" id="PRO_0000413504" description="Large ribosomal subunit protein eL20">
    <location>
        <begin position="1"/>
        <end position="189"/>
    </location>
</feature>
<keyword id="KW-0002">3D-structure</keyword>
<keyword id="KW-0963">Cytoplasm</keyword>
<keyword id="KW-0687">Ribonucleoprotein</keyword>
<keyword id="KW-0689">Ribosomal protein</keyword>
<evidence type="ECO:0000250" key="1"/>
<evidence type="ECO:0000305" key="2"/>
<protein>
    <recommendedName>
        <fullName evidence="2">Large ribosomal subunit protein eL20</fullName>
    </recommendedName>
    <alternativeName>
        <fullName>60S ribosomal protein L18a</fullName>
    </alternativeName>
</protein>